<protein>
    <recommendedName>
        <fullName evidence="1">Small ribosomal subunit protein uS7</fullName>
    </recommendedName>
    <alternativeName>
        <fullName evidence="3">30S ribosomal protein S7</fullName>
    </alternativeName>
</protein>
<name>RS7_HALS3</name>
<reference key="1">
    <citation type="journal article" date="1989" name="J. Mol. Biol.">
        <title>Sequence, organization, transcription and evolution of RNA polymerase subunit genes from the archaebacterial extreme halophiles Halobacterium halobium and Halococcus morrhuae.</title>
        <authorList>
            <person name="Leffers H."/>
            <person name="Gropp F."/>
            <person name="Lottspeich F."/>
            <person name="Zillig W."/>
            <person name="Garrett R.A."/>
        </authorList>
    </citation>
    <scope>NUCLEOTIDE SEQUENCE [GENOMIC DNA]</scope>
    <source>
        <strain>ATCC 29341 / DSM 671 / R1</strain>
    </source>
</reference>
<reference key="2">
    <citation type="journal article" date="2008" name="Genomics">
        <title>Evolution in the laboratory: the genome of Halobacterium salinarum strain R1 compared to that of strain NRC-1.</title>
        <authorList>
            <person name="Pfeiffer F."/>
            <person name="Schuster S.C."/>
            <person name="Broicher A."/>
            <person name="Falb M."/>
            <person name="Palm P."/>
            <person name="Rodewald K."/>
            <person name="Ruepp A."/>
            <person name="Soppa J."/>
            <person name="Tittor J."/>
            <person name="Oesterhelt D."/>
        </authorList>
    </citation>
    <scope>NUCLEOTIDE SEQUENCE [LARGE SCALE GENOMIC DNA]</scope>
    <source>
        <strain>ATCC 29341 / DSM 671 / R1</strain>
    </source>
</reference>
<sequence>MSDEQPAEDETEEAAAESEDTQEVAANAKLFGKWDVAEIHYEDPSTRRYLAVTPVAHTMGRHAQKQFKKSEISIVERLANRLMKTGANAGKKQQALKIVRDAFDIVHERTDENPIQVLVSAVENAAPREETVRLKYGGISVPQAVDTAPQRRVDQALKFLADGAHSASFKTPTDAAEALANQLAGAADYNVQTYAIGQKKEKERVAAAAR</sequence>
<proteinExistence type="inferred from homology"/>
<dbReference type="EMBL" id="X57144">
    <property type="protein sequence ID" value="CAA40430.1"/>
    <property type="molecule type" value="Genomic_DNA"/>
</dbReference>
<dbReference type="EMBL" id="AM774415">
    <property type="protein sequence ID" value="CAP14999.1"/>
    <property type="molecule type" value="Genomic_DNA"/>
</dbReference>
<dbReference type="PIR" id="S03583">
    <property type="entry name" value="S03583"/>
</dbReference>
<dbReference type="RefSeq" id="WP_010903992.1">
    <property type="nucleotide sequence ID" value="NC_010364.1"/>
</dbReference>
<dbReference type="SMR" id="B0R8D0"/>
<dbReference type="EnsemblBacteria" id="CAP14999">
    <property type="protein sequence ID" value="CAP14999"/>
    <property type="gene ID" value="OE_4735R"/>
</dbReference>
<dbReference type="KEGG" id="hsl:OE_4735R"/>
<dbReference type="HOGENOM" id="CLU_063975_0_0_2"/>
<dbReference type="PhylomeDB" id="B0R8D0"/>
<dbReference type="Proteomes" id="UP000001321">
    <property type="component" value="Chromosome"/>
</dbReference>
<dbReference type="GO" id="GO:0015935">
    <property type="term" value="C:small ribosomal subunit"/>
    <property type="evidence" value="ECO:0007669"/>
    <property type="project" value="InterPro"/>
</dbReference>
<dbReference type="GO" id="GO:0019843">
    <property type="term" value="F:rRNA binding"/>
    <property type="evidence" value="ECO:0007669"/>
    <property type="project" value="UniProtKB-UniRule"/>
</dbReference>
<dbReference type="GO" id="GO:0003735">
    <property type="term" value="F:structural constituent of ribosome"/>
    <property type="evidence" value="ECO:0007669"/>
    <property type="project" value="InterPro"/>
</dbReference>
<dbReference type="GO" id="GO:0006412">
    <property type="term" value="P:translation"/>
    <property type="evidence" value="ECO:0007669"/>
    <property type="project" value="UniProtKB-UniRule"/>
</dbReference>
<dbReference type="CDD" id="cd14867">
    <property type="entry name" value="uS7_Eukaryote"/>
    <property type="match status" value="1"/>
</dbReference>
<dbReference type="Gene3D" id="1.10.455.10">
    <property type="entry name" value="Ribosomal protein S7 domain"/>
    <property type="match status" value="1"/>
</dbReference>
<dbReference type="HAMAP" id="MF_00480_A">
    <property type="entry name" value="Ribosomal_uS7_A"/>
    <property type="match status" value="1"/>
</dbReference>
<dbReference type="InterPro" id="IPR000235">
    <property type="entry name" value="Ribosomal_uS7"/>
</dbReference>
<dbReference type="InterPro" id="IPR026018">
    <property type="entry name" value="Ribosomal_uS7_arc"/>
</dbReference>
<dbReference type="InterPro" id="IPR020606">
    <property type="entry name" value="Ribosomal_uS7_CS"/>
</dbReference>
<dbReference type="InterPro" id="IPR023798">
    <property type="entry name" value="Ribosomal_uS7_dom"/>
</dbReference>
<dbReference type="InterPro" id="IPR036823">
    <property type="entry name" value="Ribosomal_uS7_dom_sf"/>
</dbReference>
<dbReference type="InterPro" id="IPR005716">
    <property type="entry name" value="Ribosomal_uS7_euk/arc"/>
</dbReference>
<dbReference type="NCBIfam" id="NF003106">
    <property type="entry name" value="PRK04027.1"/>
    <property type="match status" value="1"/>
</dbReference>
<dbReference type="NCBIfam" id="TIGR01028">
    <property type="entry name" value="uS7_euk_arch"/>
    <property type="match status" value="1"/>
</dbReference>
<dbReference type="PANTHER" id="PTHR11205">
    <property type="entry name" value="RIBOSOMAL PROTEIN S7"/>
    <property type="match status" value="1"/>
</dbReference>
<dbReference type="Pfam" id="PF00177">
    <property type="entry name" value="Ribosomal_S7"/>
    <property type="match status" value="1"/>
</dbReference>
<dbReference type="PIRSF" id="PIRSF002122">
    <property type="entry name" value="RPS7p_RPS7a_RPS5e_RPS7o"/>
    <property type="match status" value="1"/>
</dbReference>
<dbReference type="SUPFAM" id="SSF47973">
    <property type="entry name" value="Ribosomal protein S7"/>
    <property type="match status" value="1"/>
</dbReference>
<dbReference type="PROSITE" id="PS00052">
    <property type="entry name" value="RIBOSOMAL_S7"/>
    <property type="match status" value="1"/>
</dbReference>
<comment type="function">
    <text evidence="1">One of the primary rRNA binding proteins, it binds directly to 16S rRNA where it nucleates assembly of the head domain of the 30S subunit. Is located at the subunit interface close to the decoding center.</text>
</comment>
<comment type="subunit">
    <text evidence="1">Part of the 30S ribosomal subunit. Contacts proteins S9 and S11.</text>
</comment>
<comment type="similarity">
    <text evidence="1">Belongs to the universal ribosomal protein uS7 family.</text>
</comment>
<feature type="chain" id="PRO_0000409670" description="Small ribosomal subunit protein uS7">
    <location>
        <begin position="1"/>
        <end position="210"/>
    </location>
</feature>
<feature type="region of interest" description="Disordered" evidence="2">
    <location>
        <begin position="1"/>
        <end position="23"/>
    </location>
</feature>
<feature type="compositionally biased region" description="Acidic residues" evidence="2">
    <location>
        <begin position="1"/>
        <end position="22"/>
    </location>
</feature>
<gene>
    <name evidence="1" type="primary">rps7</name>
    <name type="ordered locus">OE_4735R</name>
</gene>
<keyword id="KW-0687">Ribonucleoprotein</keyword>
<keyword id="KW-0689">Ribosomal protein</keyword>
<keyword id="KW-0694">RNA-binding</keyword>
<keyword id="KW-0699">rRNA-binding</keyword>
<evidence type="ECO:0000255" key="1">
    <source>
        <dbReference type="HAMAP-Rule" id="MF_00480"/>
    </source>
</evidence>
<evidence type="ECO:0000256" key="2">
    <source>
        <dbReference type="SAM" id="MobiDB-lite"/>
    </source>
</evidence>
<evidence type="ECO:0000305" key="3"/>
<organism>
    <name type="scientific">Halobacterium salinarum (strain ATCC 29341 / DSM 671 / R1)</name>
    <dbReference type="NCBI Taxonomy" id="478009"/>
    <lineage>
        <taxon>Archaea</taxon>
        <taxon>Methanobacteriati</taxon>
        <taxon>Methanobacteriota</taxon>
        <taxon>Stenosarchaea group</taxon>
        <taxon>Halobacteria</taxon>
        <taxon>Halobacteriales</taxon>
        <taxon>Halobacteriaceae</taxon>
        <taxon>Halobacterium</taxon>
        <taxon>Halobacterium salinarum NRC-34001</taxon>
    </lineage>
</organism>
<accession>B0R8D0</accession>
<accession>P15763</accession>
<accession>Q9HM83</accession>